<gene>
    <name evidence="1" type="primary">Pgam5</name>
    <name type="ORF">GE16503</name>
</gene>
<sequence length="289" mass="33139">MRKLTSFVCGTGAGFAAYYLQRLRDPQAAVHNSWTNSDKPVDPWALWDTNWDCREPRALVRPLRNSQPEEENRYNAELEKAKAKKARHIILVRHGEYLDVGDSDDTHHLTDRGRKQAEFTGKRLSELGIKWDKIVASTMVRAQETSDIILKQIEFEKEKVVNCAFLREGAPIPPQPPVGHWKPEASQFLRDGSRIEAAFRRYFHRAYPDQEKESYTLIVGHGNVIRYFVCRALQFPAEGWLRISINHASITWLTISPSGNVSIKYLGDSGFMPPELLTNRIPRDVKNVV</sequence>
<comment type="function">
    <text evidence="1">Displays phosphatase activity for serine/threonine residues, and dephosphorylates and activates Pk92B kinase. Has apparently no phosphoglycerate mutase activity (By similarity).</text>
</comment>
<comment type="catalytic activity">
    <reaction>
        <text>O-phospho-L-seryl-[protein] + H2O = L-seryl-[protein] + phosphate</text>
        <dbReference type="Rhea" id="RHEA:20629"/>
        <dbReference type="Rhea" id="RHEA-COMP:9863"/>
        <dbReference type="Rhea" id="RHEA-COMP:11604"/>
        <dbReference type="ChEBI" id="CHEBI:15377"/>
        <dbReference type="ChEBI" id="CHEBI:29999"/>
        <dbReference type="ChEBI" id="CHEBI:43474"/>
        <dbReference type="ChEBI" id="CHEBI:83421"/>
        <dbReference type="EC" id="3.1.3.16"/>
    </reaction>
</comment>
<comment type="catalytic activity">
    <reaction>
        <text>O-phospho-L-threonyl-[protein] + H2O = L-threonyl-[protein] + phosphate</text>
        <dbReference type="Rhea" id="RHEA:47004"/>
        <dbReference type="Rhea" id="RHEA-COMP:11060"/>
        <dbReference type="Rhea" id="RHEA-COMP:11605"/>
        <dbReference type="ChEBI" id="CHEBI:15377"/>
        <dbReference type="ChEBI" id="CHEBI:30013"/>
        <dbReference type="ChEBI" id="CHEBI:43474"/>
        <dbReference type="ChEBI" id="CHEBI:61977"/>
        <dbReference type="EC" id="3.1.3.16"/>
    </reaction>
</comment>
<comment type="subunit">
    <text evidence="1">Interacts with Pk92B/ASK1.</text>
</comment>
<comment type="subcellular location">
    <subcellularLocation>
        <location evidence="1">Mitochondrion outer membrane</location>
    </subcellularLocation>
</comment>
<comment type="similarity">
    <text evidence="2">Belongs to the phosphoglycerate mutase family. BPG-dependent PGAM subfamily.</text>
</comment>
<evidence type="ECO:0000250" key="1">
    <source>
        <dbReference type="UniProtKB" id="O46084"/>
    </source>
</evidence>
<evidence type="ECO:0000255" key="2"/>
<evidence type="ECO:0000312" key="3">
    <source>
        <dbReference type="EMBL" id="EDX00942.1"/>
    </source>
</evidence>
<keyword id="KW-0378">Hydrolase</keyword>
<keyword id="KW-0472">Membrane</keyword>
<keyword id="KW-0496">Mitochondrion</keyword>
<keyword id="KW-1000">Mitochondrion outer membrane</keyword>
<dbReference type="EC" id="3.1.3.16"/>
<dbReference type="EMBL" id="CM000162">
    <property type="protein sequence ID" value="EDX00942.1"/>
    <property type="molecule type" value="Genomic_DNA"/>
</dbReference>
<dbReference type="SMR" id="B4PY69"/>
<dbReference type="EnsemblMetazoa" id="FBtr0263021">
    <property type="protein sequence ID" value="FBpp0261513"/>
    <property type="gene ID" value="FBgn0234020"/>
</dbReference>
<dbReference type="EnsemblMetazoa" id="XM_002099798.4">
    <property type="protein sequence ID" value="XP_002099834.1"/>
    <property type="gene ID" value="LOC6523962"/>
</dbReference>
<dbReference type="GeneID" id="6523962"/>
<dbReference type="CTD" id="192111"/>
<dbReference type="eggNOG" id="KOG4609">
    <property type="taxonomic scope" value="Eukaryota"/>
</dbReference>
<dbReference type="HOGENOM" id="CLU_063130_0_1_1"/>
<dbReference type="OMA" id="QLPLFAW"/>
<dbReference type="OrthoDB" id="2118094at2759"/>
<dbReference type="PhylomeDB" id="B4PY69"/>
<dbReference type="Proteomes" id="UP000002282">
    <property type="component" value="Chromosome X"/>
</dbReference>
<dbReference type="GO" id="GO:0005741">
    <property type="term" value="C:mitochondrial outer membrane"/>
    <property type="evidence" value="ECO:0007669"/>
    <property type="project" value="UniProtKB-SubCell"/>
</dbReference>
<dbReference type="GO" id="GO:0019900">
    <property type="term" value="F:kinase binding"/>
    <property type="evidence" value="ECO:0007669"/>
    <property type="project" value="EnsemblMetazoa"/>
</dbReference>
<dbReference type="GO" id="GO:0004721">
    <property type="term" value="F:phosphoprotein phosphatase activity"/>
    <property type="evidence" value="ECO:0000250"/>
    <property type="project" value="UniProtKB"/>
</dbReference>
<dbReference type="GO" id="GO:0043539">
    <property type="term" value="F:protein serine/threonine kinase activator activity"/>
    <property type="evidence" value="ECO:0007669"/>
    <property type="project" value="EnsemblMetazoa"/>
</dbReference>
<dbReference type="GO" id="GO:0004722">
    <property type="term" value="F:protein serine/threonine phosphatase activity"/>
    <property type="evidence" value="ECO:0007669"/>
    <property type="project" value="UniProtKB-EC"/>
</dbReference>
<dbReference type="GO" id="GO:0090141">
    <property type="term" value="P:positive regulation of mitochondrial fission"/>
    <property type="evidence" value="ECO:0007669"/>
    <property type="project" value="EnsemblMetazoa"/>
</dbReference>
<dbReference type="GO" id="GO:0010636">
    <property type="term" value="P:positive regulation of mitochondrial fusion"/>
    <property type="evidence" value="ECO:0007669"/>
    <property type="project" value="EnsemblMetazoa"/>
</dbReference>
<dbReference type="GO" id="GO:0006470">
    <property type="term" value="P:protein dephosphorylation"/>
    <property type="evidence" value="ECO:0000250"/>
    <property type="project" value="UniProtKB"/>
</dbReference>
<dbReference type="GO" id="GO:0072347">
    <property type="term" value="P:response to anesthetic"/>
    <property type="evidence" value="ECO:0007669"/>
    <property type="project" value="EnsemblMetazoa"/>
</dbReference>
<dbReference type="GO" id="GO:0009408">
    <property type="term" value="P:response to heat"/>
    <property type="evidence" value="ECO:0007669"/>
    <property type="project" value="EnsemblMetazoa"/>
</dbReference>
<dbReference type="CDD" id="cd07067">
    <property type="entry name" value="HP_PGM_like"/>
    <property type="match status" value="1"/>
</dbReference>
<dbReference type="FunFam" id="3.40.50.1240:FF:000009">
    <property type="entry name" value="serine/threonine-protein phosphatase PGAM5, mitochondrial isoform X1"/>
    <property type="match status" value="1"/>
</dbReference>
<dbReference type="Gene3D" id="3.40.50.1240">
    <property type="entry name" value="Phosphoglycerate mutase-like"/>
    <property type="match status" value="1"/>
</dbReference>
<dbReference type="InterPro" id="IPR013078">
    <property type="entry name" value="His_Pase_superF_clade-1"/>
</dbReference>
<dbReference type="InterPro" id="IPR029033">
    <property type="entry name" value="His_PPase_superfam"/>
</dbReference>
<dbReference type="InterPro" id="IPR051021">
    <property type="entry name" value="Mito_Ser/Thr_phosphatase"/>
</dbReference>
<dbReference type="PANTHER" id="PTHR20935">
    <property type="entry name" value="PHOSPHOGLYCERATE MUTASE-RELATED"/>
    <property type="match status" value="1"/>
</dbReference>
<dbReference type="PANTHER" id="PTHR20935:SF0">
    <property type="entry name" value="SERINE_THREONINE-PROTEIN PHOSPHATASE PGAM5, MITOCHONDRIAL"/>
    <property type="match status" value="1"/>
</dbReference>
<dbReference type="Pfam" id="PF00300">
    <property type="entry name" value="His_Phos_1"/>
    <property type="match status" value="2"/>
</dbReference>
<dbReference type="SMART" id="SM00855">
    <property type="entry name" value="PGAM"/>
    <property type="match status" value="1"/>
</dbReference>
<dbReference type="SUPFAM" id="SSF53254">
    <property type="entry name" value="Phosphoglycerate mutase-like"/>
    <property type="match status" value="1"/>
</dbReference>
<protein>
    <recommendedName>
        <fullName evidence="1">Serine/threonine-protein phosphatase Pgam5, mitochondrial</fullName>
        <ecNumber>3.1.3.16</ecNumber>
    </recommendedName>
    <alternativeName>
        <fullName evidence="1">Phosphoglycerate mutase family member 5 homolog</fullName>
    </alternativeName>
</protein>
<name>PGAM5_DROYA</name>
<organism>
    <name type="scientific">Drosophila yakuba</name>
    <name type="common">Fruit fly</name>
    <dbReference type="NCBI Taxonomy" id="7245"/>
    <lineage>
        <taxon>Eukaryota</taxon>
        <taxon>Metazoa</taxon>
        <taxon>Ecdysozoa</taxon>
        <taxon>Arthropoda</taxon>
        <taxon>Hexapoda</taxon>
        <taxon>Insecta</taxon>
        <taxon>Pterygota</taxon>
        <taxon>Neoptera</taxon>
        <taxon>Endopterygota</taxon>
        <taxon>Diptera</taxon>
        <taxon>Brachycera</taxon>
        <taxon>Muscomorpha</taxon>
        <taxon>Ephydroidea</taxon>
        <taxon>Drosophilidae</taxon>
        <taxon>Drosophila</taxon>
        <taxon>Sophophora</taxon>
    </lineage>
</organism>
<reference evidence="3" key="1">
    <citation type="journal article" date="2007" name="Nature">
        <title>Evolution of genes and genomes on the Drosophila phylogeny.</title>
        <authorList>
            <consortium name="Drosophila 12 genomes consortium"/>
        </authorList>
    </citation>
    <scope>NUCLEOTIDE SEQUENCE [LARGE SCALE GENOMIC DNA]</scope>
    <source>
        <strain evidence="3">Tai18E2 / Tucson 14021-0261.01</strain>
    </source>
</reference>
<feature type="chain" id="PRO_0000390712" description="Serine/threonine-protein phosphatase Pgam5, mitochondrial">
    <location>
        <begin position="1"/>
        <end position="289"/>
    </location>
</feature>
<accession>B4PY69</accession>
<proteinExistence type="inferred from homology"/>